<dbReference type="EMBL" id="AY484463">
    <property type="protein sequence ID" value="AAR39439.1"/>
    <property type="molecule type" value="Genomic_DNA"/>
</dbReference>
<dbReference type="EMBL" id="AAFI02000200">
    <property type="protein sequence ID" value="EAL60798.1"/>
    <property type="molecule type" value="Genomic_DNA"/>
</dbReference>
<dbReference type="RefSeq" id="XP_629230.1">
    <property type="nucleotide sequence ID" value="XM_629228.1"/>
</dbReference>
<dbReference type="SMR" id="Q6S002"/>
<dbReference type="FunCoup" id="Q6S002">
    <property type="interactions" value="136"/>
</dbReference>
<dbReference type="STRING" id="44689.Q6S002"/>
<dbReference type="GlyGen" id="Q6S002">
    <property type="glycosylation" value="1 site"/>
</dbReference>
<dbReference type="PaxDb" id="44689-DDB0215386"/>
<dbReference type="EnsemblProtists" id="EAL60798">
    <property type="protein sequence ID" value="EAL60798"/>
    <property type="gene ID" value="DDB_G0293198"/>
</dbReference>
<dbReference type="GeneID" id="8629112"/>
<dbReference type="KEGG" id="ddi:DDB_G0293198"/>
<dbReference type="dictyBase" id="DDB_G0293198">
    <property type="gene designation" value="kif10"/>
</dbReference>
<dbReference type="VEuPathDB" id="AmoebaDB:DDB_G0293198"/>
<dbReference type="eggNOG" id="KOG0242">
    <property type="taxonomic scope" value="Eukaryota"/>
</dbReference>
<dbReference type="HOGENOM" id="CLU_267010_0_0_1"/>
<dbReference type="InParanoid" id="Q6S002"/>
<dbReference type="OMA" id="KFQMESF"/>
<dbReference type="PRO" id="PR:Q6S002"/>
<dbReference type="Proteomes" id="UP000002195">
    <property type="component" value="Chromosome 6"/>
</dbReference>
<dbReference type="GO" id="GO:0005737">
    <property type="term" value="C:cytoplasm"/>
    <property type="evidence" value="ECO:0000314"/>
    <property type="project" value="dictyBase"/>
</dbReference>
<dbReference type="GO" id="GO:0005871">
    <property type="term" value="C:kinesin complex"/>
    <property type="evidence" value="ECO:0000318"/>
    <property type="project" value="GO_Central"/>
</dbReference>
<dbReference type="GO" id="GO:0061673">
    <property type="term" value="C:mitotic spindle astral microtubule"/>
    <property type="evidence" value="ECO:0000318"/>
    <property type="project" value="GO_Central"/>
</dbReference>
<dbReference type="GO" id="GO:1990023">
    <property type="term" value="C:mitotic spindle midzone"/>
    <property type="evidence" value="ECO:0000318"/>
    <property type="project" value="GO_Central"/>
</dbReference>
<dbReference type="GO" id="GO:0005634">
    <property type="term" value="C:nucleus"/>
    <property type="evidence" value="ECO:0000314"/>
    <property type="project" value="dictyBase"/>
</dbReference>
<dbReference type="GO" id="GO:0005876">
    <property type="term" value="C:spindle microtubule"/>
    <property type="evidence" value="ECO:0000314"/>
    <property type="project" value="dictyBase"/>
</dbReference>
<dbReference type="GO" id="GO:0005524">
    <property type="term" value="F:ATP binding"/>
    <property type="evidence" value="ECO:0007669"/>
    <property type="project" value="UniProtKB-KW"/>
</dbReference>
<dbReference type="GO" id="GO:0016887">
    <property type="term" value="F:ATP hydrolysis activity"/>
    <property type="evidence" value="ECO:0000318"/>
    <property type="project" value="GO_Central"/>
</dbReference>
<dbReference type="GO" id="GO:0008017">
    <property type="term" value="F:microtubule binding"/>
    <property type="evidence" value="ECO:0000314"/>
    <property type="project" value="dictyBase"/>
</dbReference>
<dbReference type="GO" id="GO:0003777">
    <property type="term" value="F:microtubule motor activity"/>
    <property type="evidence" value="ECO:0000314"/>
    <property type="project" value="dictyBase"/>
</dbReference>
<dbReference type="GO" id="GO:0008574">
    <property type="term" value="F:plus-end-directed microtubule motor activity"/>
    <property type="evidence" value="ECO:0000318"/>
    <property type="project" value="GO_Central"/>
</dbReference>
<dbReference type="GO" id="GO:0051301">
    <property type="term" value="P:cell division"/>
    <property type="evidence" value="ECO:0007669"/>
    <property type="project" value="UniProtKB-KW"/>
</dbReference>
<dbReference type="GO" id="GO:0031122">
    <property type="term" value="P:cytoplasmic microtubule organization"/>
    <property type="evidence" value="ECO:0000316"/>
    <property type="project" value="dictyBase"/>
</dbReference>
<dbReference type="GO" id="GO:0007019">
    <property type="term" value="P:microtubule depolymerization"/>
    <property type="evidence" value="ECO:0000318"/>
    <property type="project" value="GO_Central"/>
</dbReference>
<dbReference type="GO" id="GO:0007018">
    <property type="term" value="P:microtubule-based movement"/>
    <property type="evidence" value="ECO:0000318"/>
    <property type="project" value="GO_Central"/>
</dbReference>
<dbReference type="GO" id="GO:0000070">
    <property type="term" value="P:mitotic sister chromatid segregation"/>
    <property type="evidence" value="ECO:0000318"/>
    <property type="project" value="GO_Central"/>
</dbReference>
<dbReference type="CDD" id="cd01370">
    <property type="entry name" value="KISc_KIP3_like"/>
    <property type="match status" value="1"/>
</dbReference>
<dbReference type="FunFam" id="3.40.850.10:FF:000054">
    <property type="entry name" value="Kinesin-like protein"/>
    <property type="match status" value="1"/>
</dbReference>
<dbReference type="Gene3D" id="3.40.850.10">
    <property type="entry name" value="Kinesin motor domain"/>
    <property type="match status" value="1"/>
</dbReference>
<dbReference type="InterPro" id="IPR027640">
    <property type="entry name" value="Kinesin-like_fam"/>
</dbReference>
<dbReference type="InterPro" id="IPR019821">
    <property type="entry name" value="Kinesin_motor_CS"/>
</dbReference>
<dbReference type="InterPro" id="IPR001752">
    <property type="entry name" value="Kinesin_motor_dom"/>
</dbReference>
<dbReference type="InterPro" id="IPR036961">
    <property type="entry name" value="Kinesin_motor_dom_sf"/>
</dbReference>
<dbReference type="InterPro" id="IPR027417">
    <property type="entry name" value="P-loop_NTPase"/>
</dbReference>
<dbReference type="PANTHER" id="PTHR47968">
    <property type="entry name" value="CENTROMERE PROTEIN E"/>
    <property type="match status" value="1"/>
</dbReference>
<dbReference type="PANTHER" id="PTHR47968:SF65">
    <property type="entry name" value="KINESIN MOTOR DOMAIN-CONTAINING PROTEIN"/>
    <property type="match status" value="1"/>
</dbReference>
<dbReference type="Pfam" id="PF00225">
    <property type="entry name" value="Kinesin"/>
    <property type="match status" value="1"/>
</dbReference>
<dbReference type="PRINTS" id="PR00380">
    <property type="entry name" value="KINESINHEAVY"/>
</dbReference>
<dbReference type="SMART" id="SM00129">
    <property type="entry name" value="KISc"/>
    <property type="match status" value="1"/>
</dbReference>
<dbReference type="SUPFAM" id="SSF52540">
    <property type="entry name" value="P-loop containing nucleoside triphosphate hydrolases"/>
    <property type="match status" value="1"/>
</dbReference>
<dbReference type="PROSITE" id="PS00411">
    <property type="entry name" value="KINESIN_MOTOR_1"/>
    <property type="match status" value="1"/>
</dbReference>
<dbReference type="PROSITE" id="PS50067">
    <property type="entry name" value="KINESIN_MOTOR_2"/>
    <property type="match status" value="1"/>
</dbReference>
<accession>Q6S002</accession>
<accession>Q54C36</accession>
<evidence type="ECO:0000250" key="1"/>
<evidence type="ECO:0000255" key="2"/>
<evidence type="ECO:0000255" key="3">
    <source>
        <dbReference type="PROSITE-ProRule" id="PRU00283"/>
    </source>
</evidence>
<evidence type="ECO:0000256" key="4">
    <source>
        <dbReference type="SAM" id="MobiDB-lite"/>
    </source>
</evidence>
<evidence type="ECO:0000269" key="5">
    <source>
    </source>
</evidence>
<keyword id="KW-0067">ATP-binding</keyword>
<keyword id="KW-0131">Cell cycle</keyword>
<keyword id="KW-0132">Cell division</keyword>
<keyword id="KW-0175">Coiled coil</keyword>
<keyword id="KW-0963">Cytoplasm</keyword>
<keyword id="KW-0206">Cytoskeleton</keyword>
<keyword id="KW-0493">Microtubule</keyword>
<keyword id="KW-0498">Mitosis</keyword>
<keyword id="KW-0505">Motor protein</keyword>
<keyword id="KW-0547">Nucleotide-binding</keyword>
<keyword id="KW-1185">Reference proteome</keyword>
<keyword id="KW-0813">Transport</keyword>
<sequence length="1238" mass="139012">MNNNNNNNNNKTTMNSMIVTVRIRPESQSEILNKNCKTIVRVIDDNMLVFDPNDIDIGAFNNNRNNKQSQQPVEQKYIFDRVFDQYATQEEVFENTTKELVSYVISGHNASVFAYGASGAGKTHTMVGGINTGPGIMVLTMKELFSLIEKDRSNQYIVSMSYLEVYNETIRDLLITNTGGGGNSNNKVLELCEDENKQIVIRDLSWEYPTSADQVFKLLKYGNLNRKQSPTQTNQTSSRSHAVLQITVKQQNLQDKSKISFGKLSLIDLAGSERASKTLNTGDRLKEGTSINKSLLALGNCIKALGELCKNQQSQQQSSNPNFIPYRDSKLTRILKDSLTGSCKTIMIANISPNSSSFEETHNTLKYAQRAKSIKTQITKNVFASSTNLITQYNEIIKEQREEIKQLKLKLIQATSNNNNSNNNNNNNNNNYFSNSFGSCGNKNQPIKQPTPPTSLFHQQNQKYYRNDDDDDDDNDQEENNDEVLINEDDEEVDGEDSNNRDNDESMIQQLEEMSLLINSNLQDTLTLKKTQSIQRQRKRELENELKSLEKQQQSILNENNNVDIIKRTNEIGSQILKIKTLESSINEKLEMNNQWRRKLQSELTLKFVNSPKNLKILIQQARAATLELDRFDLTERMIDDRSKLNLKTNECKSLKDSLSWMFGILSDGFKLLTENNLATDDFLKDFLKSGDLINNLDNSFIINENNDSNNNNIIENDDIDLSFNNDINNNNNNNNNNNNNNNNNNNNNNNNNNNNNNNNNNNNNNNNNNNNNNVPLNCNNSNSNINNKNQNIINPSPLKPRRIMSGSNNIIKSTNSNSRMTSTATTTAASTATATTTTIGKEKKGEIRSIVNPINKISSSTSLLPSSSTKISNTTPLYSRTSILRKRTLEIDDSTDSNPRTKKINVSSPVVTKPKQLLPSTTTATTTTLSSPLVNKPKQILPTTSSLQPKPHTKIQPHKNNNNNNNNIAPQMNMNIQIPNPIPIPIPMHVQIPISNPIPMPSPSSMNLKEKLDSLSQLCNNRSAKNENYNHNNSFNSQNPFVHPLQMHPPQLQLPLHPPQTMIMQSNMDLKMKLDSLSFFNNNNNNHQAQNDLSFDYGQNTLSNENLILHNKIASLSSTLINQPHPMRVKKLTPTSTISSSISTRPITTSTTTSTTVPSVVSNRIKSLVHSNSPIKENLYKEKLSSTASATLTPNRNNSQIVQPFKRGVLGNGPTSSSSRLLPSSRTTVNTSRKIIK</sequence>
<comment type="function">
    <text evidence="1 5">Microtubule-associated force-producing protein that plays a role in organelle transport. Its motor activity is directed toward the microtubule's plus end (By similarity). Cooperates with kif8 and dynein to organize interphase microtubules.</text>
</comment>
<comment type="subcellular location">
    <subcellularLocation>
        <location evidence="1">Cytoplasm</location>
        <location evidence="1">Cytoskeleton</location>
    </subcellularLocation>
</comment>
<comment type="similarity">
    <text evidence="3">Belongs to the TRAFAC class myosin-kinesin ATPase superfamily. Kinesin family.</text>
</comment>
<feature type="chain" id="PRO_0000365585" description="Kinesin-related protein 10">
    <location>
        <begin position="1"/>
        <end position="1238"/>
    </location>
</feature>
<feature type="domain" description="Kinesin motor" evidence="3">
    <location>
        <begin position="16"/>
        <end position="374"/>
    </location>
</feature>
<feature type="region of interest" description="Disordered" evidence="4">
    <location>
        <begin position="417"/>
        <end position="503"/>
    </location>
</feature>
<feature type="region of interest" description="Disordered" evidence="4">
    <location>
        <begin position="726"/>
        <end position="802"/>
    </location>
</feature>
<feature type="region of interest" description="Disordered" evidence="4">
    <location>
        <begin position="891"/>
        <end position="971"/>
    </location>
</feature>
<feature type="region of interest" description="Disordered" evidence="4">
    <location>
        <begin position="1134"/>
        <end position="1156"/>
    </location>
</feature>
<feature type="region of interest" description="Disordered" evidence="4">
    <location>
        <begin position="1191"/>
        <end position="1238"/>
    </location>
</feature>
<feature type="coiled-coil region" evidence="2">
    <location>
        <begin position="527"/>
        <end position="602"/>
    </location>
</feature>
<feature type="compositionally biased region" description="Low complexity" evidence="4">
    <location>
        <begin position="417"/>
        <end position="436"/>
    </location>
</feature>
<feature type="compositionally biased region" description="Polar residues" evidence="4">
    <location>
        <begin position="437"/>
        <end position="464"/>
    </location>
</feature>
<feature type="compositionally biased region" description="Acidic residues" evidence="4">
    <location>
        <begin position="468"/>
        <end position="497"/>
    </location>
</feature>
<feature type="compositionally biased region" description="Low complexity" evidence="4">
    <location>
        <begin position="726"/>
        <end position="795"/>
    </location>
</feature>
<feature type="compositionally biased region" description="Low complexity" evidence="4">
    <location>
        <begin position="918"/>
        <end position="934"/>
    </location>
</feature>
<feature type="compositionally biased region" description="Low complexity" evidence="4">
    <location>
        <begin position="961"/>
        <end position="971"/>
    </location>
</feature>
<feature type="compositionally biased region" description="Polar residues" evidence="4">
    <location>
        <begin position="1191"/>
        <end position="1203"/>
    </location>
</feature>
<feature type="compositionally biased region" description="Low complexity" evidence="4">
    <location>
        <begin position="1215"/>
        <end position="1228"/>
    </location>
</feature>
<feature type="compositionally biased region" description="Polar residues" evidence="4">
    <location>
        <begin position="1229"/>
        <end position="1238"/>
    </location>
</feature>
<feature type="binding site" evidence="3">
    <location>
        <begin position="116"/>
        <end position="123"/>
    </location>
    <ligand>
        <name>ATP</name>
        <dbReference type="ChEBI" id="CHEBI:30616"/>
    </ligand>
</feature>
<gene>
    <name type="primary">kif10</name>
    <name type="ORF">DDB_G0293198</name>
</gene>
<proteinExistence type="inferred from homology"/>
<reference key="1">
    <citation type="journal article" date="2003" name="BMC Genomics">
        <title>Identification and phylogenetic analysis of Dictyostelium discoideum kinesin proteins.</title>
        <authorList>
            <person name="Kollmar M."/>
            <person name="Gloeckner G."/>
        </authorList>
    </citation>
    <scope>NUCLEOTIDE SEQUENCE [GENOMIC DNA]</scope>
    <scope>IDENTIFICATION</scope>
    <scope>NOMENCLATURE</scope>
    <source>
        <strain>AX4</strain>
    </source>
</reference>
<reference key="2">
    <citation type="journal article" date="2005" name="Nature">
        <title>The genome of the social amoeba Dictyostelium discoideum.</title>
        <authorList>
            <person name="Eichinger L."/>
            <person name="Pachebat J.A."/>
            <person name="Gloeckner G."/>
            <person name="Rajandream M.A."/>
            <person name="Sucgang R."/>
            <person name="Berriman M."/>
            <person name="Song J."/>
            <person name="Olsen R."/>
            <person name="Szafranski K."/>
            <person name="Xu Q."/>
            <person name="Tunggal B."/>
            <person name="Kummerfeld S."/>
            <person name="Madera M."/>
            <person name="Konfortov B.A."/>
            <person name="Rivero F."/>
            <person name="Bankier A.T."/>
            <person name="Lehmann R."/>
            <person name="Hamlin N."/>
            <person name="Davies R."/>
            <person name="Gaudet P."/>
            <person name="Fey P."/>
            <person name="Pilcher K."/>
            <person name="Chen G."/>
            <person name="Saunders D."/>
            <person name="Sodergren E.J."/>
            <person name="Davis P."/>
            <person name="Kerhornou A."/>
            <person name="Nie X."/>
            <person name="Hall N."/>
            <person name="Anjard C."/>
            <person name="Hemphill L."/>
            <person name="Bason N."/>
            <person name="Farbrother P."/>
            <person name="Desany B."/>
            <person name="Just E."/>
            <person name="Morio T."/>
            <person name="Rost R."/>
            <person name="Churcher C.M."/>
            <person name="Cooper J."/>
            <person name="Haydock S."/>
            <person name="van Driessche N."/>
            <person name="Cronin A."/>
            <person name="Goodhead I."/>
            <person name="Muzny D.M."/>
            <person name="Mourier T."/>
            <person name="Pain A."/>
            <person name="Lu M."/>
            <person name="Harper D."/>
            <person name="Lindsay R."/>
            <person name="Hauser H."/>
            <person name="James K.D."/>
            <person name="Quiles M."/>
            <person name="Madan Babu M."/>
            <person name="Saito T."/>
            <person name="Buchrieser C."/>
            <person name="Wardroper A."/>
            <person name="Felder M."/>
            <person name="Thangavelu M."/>
            <person name="Johnson D."/>
            <person name="Knights A."/>
            <person name="Loulseged H."/>
            <person name="Mungall K.L."/>
            <person name="Oliver K."/>
            <person name="Price C."/>
            <person name="Quail M.A."/>
            <person name="Urushihara H."/>
            <person name="Hernandez J."/>
            <person name="Rabbinowitsch E."/>
            <person name="Steffen D."/>
            <person name="Sanders M."/>
            <person name="Ma J."/>
            <person name="Kohara Y."/>
            <person name="Sharp S."/>
            <person name="Simmonds M.N."/>
            <person name="Spiegler S."/>
            <person name="Tivey A."/>
            <person name="Sugano S."/>
            <person name="White B."/>
            <person name="Walker D."/>
            <person name="Woodward J.R."/>
            <person name="Winckler T."/>
            <person name="Tanaka Y."/>
            <person name="Shaulsky G."/>
            <person name="Schleicher M."/>
            <person name="Weinstock G.M."/>
            <person name="Rosenthal A."/>
            <person name="Cox E.C."/>
            <person name="Chisholm R.L."/>
            <person name="Gibbs R.A."/>
            <person name="Loomis W.F."/>
            <person name="Platzer M."/>
            <person name="Kay R.R."/>
            <person name="Williams J.G."/>
            <person name="Dear P.H."/>
            <person name="Noegel A.A."/>
            <person name="Barrell B.G."/>
            <person name="Kuspa A."/>
        </authorList>
    </citation>
    <scope>NUCLEOTIDE SEQUENCE [LARGE SCALE GENOMIC DNA]</scope>
    <source>
        <strain>AX4</strain>
    </source>
</reference>
<reference key="3">
    <citation type="journal article" date="2008" name="BMC Cell Biol.">
        <title>Disruption of four kinesin genes in dictyostelium.</title>
        <authorList>
            <person name="Nag D.K."/>
            <person name="Tikhonenko I."/>
            <person name="Soga I."/>
            <person name="Koonce M.P."/>
        </authorList>
    </citation>
    <scope>FUNCTION</scope>
</reference>
<name>KIF10_DICDI</name>
<protein>
    <recommendedName>
        <fullName>Kinesin-related protein 10</fullName>
    </recommendedName>
    <alternativeName>
        <fullName>Kinesin family member 10</fullName>
    </alternativeName>
    <alternativeName>
        <fullName>Kinesin-8</fullName>
    </alternativeName>
</protein>
<organism>
    <name type="scientific">Dictyostelium discoideum</name>
    <name type="common">Social amoeba</name>
    <dbReference type="NCBI Taxonomy" id="44689"/>
    <lineage>
        <taxon>Eukaryota</taxon>
        <taxon>Amoebozoa</taxon>
        <taxon>Evosea</taxon>
        <taxon>Eumycetozoa</taxon>
        <taxon>Dictyostelia</taxon>
        <taxon>Dictyosteliales</taxon>
        <taxon>Dictyosteliaceae</taxon>
        <taxon>Dictyostelium</taxon>
    </lineage>
</organism>